<feature type="chain" id="PRO_0000263231" description="Peptide chain release factor 1">
    <location>
        <begin position="1"/>
        <end position="359"/>
    </location>
</feature>
<feature type="modified residue" description="N5-methylglutamine" evidence="1">
    <location>
        <position position="235"/>
    </location>
</feature>
<accession>Q5PAH2</accession>
<name>RF1_ANAMM</name>
<proteinExistence type="inferred from homology"/>
<reference key="1">
    <citation type="journal article" date="2005" name="Proc. Natl. Acad. Sci. U.S.A.">
        <title>Complete genome sequencing of Anaplasma marginale reveals that the surface is skewed to two superfamilies of outer membrane proteins.</title>
        <authorList>
            <person name="Brayton K.A."/>
            <person name="Kappmeyer L.S."/>
            <person name="Herndon D.R."/>
            <person name="Dark M.J."/>
            <person name="Tibbals D.L."/>
            <person name="Palmer G.H."/>
            <person name="McGuire T.C."/>
            <person name="Knowles D.P. Jr."/>
        </authorList>
    </citation>
    <scope>NUCLEOTIDE SEQUENCE [LARGE SCALE GENOMIC DNA]</scope>
    <source>
        <strain>St. Maries</strain>
    </source>
</reference>
<dbReference type="EMBL" id="CP000030">
    <property type="protein sequence ID" value="AAV86708.1"/>
    <property type="molecule type" value="Genomic_DNA"/>
</dbReference>
<dbReference type="RefSeq" id="WP_010267814.1">
    <property type="nucleotide sequence ID" value="NZ_AFMU01000011.1"/>
</dbReference>
<dbReference type="SMR" id="Q5PAH2"/>
<dbReference type="GeneID" id="7398012"/>
<dbReference type="KEGG" id="ama:AM767"/>
<dbReference type="PATRIC" id="fig|320483.3.peg.658"/>
<dbReference type="HOGENOM" id="CLU_036856_0_1_5"/>
<dbReference type="GO" id="GO:0005737">
    <property type="term" value="C:cytoplasm"/>
    <property type="evidence" value="ECO:0007669"/>
    <property type="project" value="UniProtKB-SubCell"/>
</dbReference>
<dbReference type="GO" id="GO:0016149">
    <property type="term" value="F:translation release factor activity, codon specific"/>
    <property type="evidence" value="ECO:0007669"/>
    <property type="project" value="UniProtKB-UniRule"/>
</dbReference>
<dbReference type="FunFam" id="3.30.160.20:FF:000004">
    <property type="entry name" value="Peptide chain release factor 1"/>
    <property type="match status" value="1"/>
</dbReference>
<dbReference type="FunFam" id="3.30.70.1660:FF:000002">
    <property type="entry name" value="Peptide chain release factor 1"/>
    <property type="match status" value="1"/>
</dbReference>
<dbReference type="FunFam" id="3.30.70.1660:FF:000004">
    <property type="entry name" value="Peptide chain release factor 1"/>
    <property type="match status" value="1"/>
</dbReference>
<dbReference type="Gene3D" id="3.30.160.20">
    <property type="match status" value="1"/>
</dbReference>
<dbReference type="Gene3D" id="3.30.70.1660">
    <property type="match status" value="1"/>
</dbReference>
<dbReference type="Gene3D" id="6.10.140.1950">
    <property type="match status" value="1"/>
</dbReference>
<dbReference type="HAMAP" id="MF_00093">
    <property type="entry name" value="Rel_fac_1"/>
    <property type="match status" value="1"/>
</dbReference>
<dbReference type="InterPro" id="IPR005139">
    <property type="entry name" value="PCRF"/>
</dbReference>
<dbReference type="InterPro" id="IPR000352">
    <property type="entry name" value="Pep_chain_release_fac_I"/>
</dbReference>
<dbReference type="InterPro" id="IPR045853">
    <property type="entry name" value="Pep_chain_release_fac_I_sf"/>
</dbReference>
<dbReference type="InterPro" id="IPR050057">
    <property type="entry name" value="Prokaryotic/Mito_RF"/>
</dbReference>
<dbReference type="InterPro" id="IPR004373">
    <property type="entry name" value="RF-1"/>
</dbReference>
<dbReference type="NCBIfam" id="TIGR00019">
    <property type="entry name" value="prfA"/>
    <property type="match status" value="1"/>
</dbReference>
<dbReference type="NCBIfam" id="NF001859">
    <property type="entry name" value="PRK00591.1"/>
    <property type="match status" value="1"/>
</dbReference>
<dbReference type="PANTHER" id="PTHR43804">
    <property type="entry name" value="LD18447P"/>
    <property type="match status" value="1"/>
</dbReference>
<dbReference type="PANTHER" id="PTHR43804:SF7">
    <property type="entry name" value="LD18447P"/>
    <property type="match status" value="1"/>
</dbReference>
<dbReference type="Pfam" id="PF03462">
    <property type="entry name" value="PCRF"/>
    <property type="match status" value="1"/>
</dbReference>
<dbReference type="Pfam" id="PF00472">
    <property type="entry name" value="RF-1"/>
    <property type="match status" value="1"/>
</dbReference>
<dbReference type="SMART" id="SM00937">
    <property type="entry name" value="PCRF"/>
    <property type="match status" value="1"/>
</dbReference>
<dbReference type="SUPFAM" id="SSF75620">
    <property type="entry name" value="Release factor"/>
    <property type="match status" value="1"/>
</dbReference>
<dbReference type="PROSITE" id="PS00745">
    <property type="entry name" value="RF_PROK_I"/>
    <property type="match status" value="1"/>
</dbReference>
<comment type="function">
    <text evidence="1">Peptide chain release factor 1 directs the termination of translation in response to the peptide chain termination codons UAG and UAA.</text>
</comment>
<comment type="subcellular location">
    <subcellularLocation>
        <location evidence="1">Cytoplasm</location>
    </subcellularLocation>
</comment>
<comment type="PTM">
    <text evidence="1">Methylated by PrmC. Methylation increases the termination efficiency of RF1.</text>
</comment>
<comment type="similarity">
    <text evidence="1">Belongs to the prokaryotic/mitochondrial release factor family.</text>
</comment>
<keyword id="KW-0963">Cytoplasm</keyword>
<keyword id="KW-0488">Methylation</keyword>
<keyword id="KW-0648">Protein biosynthesis</keyword>
<gene>
    <name evidence="1" type="primary">prfA</name>
    <name type="ordered locus">AM767</name>
</gene>
<evidence type="ECO:0000255" key="1">
    <source>
        <dbReference type="HAMAP-Rule" id="MF_00093"/>
    </source>
</evidence>
<organism>
    <name type="scientific">Anaplasma marginale (strain St. Maries)</name>
    <dbReference type="NCBI Taxonomy" id="234826"/>
    <lineage>
        <taxon>Bacteria</taxon>
        <taxon>Pseudomonadati</taxon>
        <taxon>Pseudomonadota</taxon>
        <taxon>Alphaproteobacteria</taxon>
        <taxon>Rickettsiales</taxon>
        <taxon>Anaplasmataceae</taxon>
        <taxon>Anaplasma</taxon>
    </lineage>
</organism>
<sequence>MSFEDSLEGLCEKFRILKQQLSDPESLGVQAFVVASREYSDLLPIMSLIEEYQTAQKEIEELEGLINSTDTDAELVHLAREELYTKQKLIPKLKHQLQLSLLPKDKDDSRSAILEIRAGTGGEEAALFVCDLYRMYIKYAERKSWKVEPIGISTTGIGGYKEASLCIGGKDVFARLKFESGVHRVQRVPETESSGRLHTSAATVAVLPEVEEVDLKIDEKDLRIDVYRSSGPGGQSVNTTDSAVRITHIPTGIVVIQQDEKSQHKNKSKALKVLRARLYNLEKQKIEDEISKMRKSQIGSGDRSERIRTYNFLQSRITDHRINMTLYRLEHIMKEGDLDEFVDALIADDQANKLQQISS</sequence>
<protein>
    <recommendedName>
        <fullName evidence="1">Peptide chain release factor 1</fullName>
        <shortName evidence="1">RF-1</shortName>
    </recommendedName>
</protein>